<gene>
    <name evidence="1" type="primary">miaB</name>
    <name type="ordered locus">CHAB381_0506</name>
</gene>
<feature type="chain" id="PRO_0000374197" description="tRNA-2-methylthio-N(6)-dimethylallyladenosine synthase">
    <location>
        <begin position="1"/>
        <end position="429"/>
    </location>
</feature>
<feature type="domain" description="MTTase N-terminal" evidence="1">
    <location>
        <begin position="2"/>
        <end position="115"/>
    </location>
</feature>
<feature type="domain" description="Radical SAM core" evidence="2">
    <location>
        <begin position="133"/>
        <end position="365"/>
    </location>
</feature>
<feature type="domain" description="TRAM" evidence="1">
    <location>
        <begin position="368"/>
        <end position="429"/>
    </location>
</feature>
<feature type="binding site" evidence="1">
    <location>
        <position position="11"/>
    </location>
    <ligand>
        <name>[4Fe-4S] cluster</name>
        <dbReference type="ChEBI" id="CHEBI:49883"/>
        <label>1</label>
    </ligand>
</feature>
<feature type="binding site" evidence="1">
    <location>
        <position position="46"/>
    </location>
    <ligand>
        <name>[4Fe-4S] cluster</name>
        <dbReference type="ChEBI" id="CHEBI:49883"/>
        <label>1</label>
    </ligand>
</feature>
<feature type="binding site" evidence="1">
    <location>
        <position position="78"/>
    </location>
    <ligand>
        <name>[4Fe-4S] cluster</name>
        <dbReference type="ChEBI" id="CHEBI:49883"/>
        <label>1</label>
    </ligand>
</feature>
<feature type="binding site" evidence="1">
    <location>
        <position position="147"/>
    </location>
    <ligand>
        <name>[4Fe-4S] cluster</name>
        <dbReference type="ChEBI" id="CHEBI:49883"/>
        <label>2</label>
        <note>4Fe-4S-S-AdoMet</note>
    </ligand>
</feature>
<feature type="binding site" evidence="1">
    <location>
        <position position="151"/>
    </location>
    <ligand>
        <name>[4Fe-4S] cluster</name>
        <dbReference type="ChEBI" id="CHEBI:49883"/>
        <label>2</label>
        <note>4Fe-4S-S-AdoMet</note>
    </ligand>
</feature>
<feature type="binding site" evidence="1">
    <location>
        <position position="154"/>
    </location>
    <ligand>
        <name>[4Fe-4S] cluster</name>
        <dbReference type="ChEBI" id="CHEBI:49883"/>
        <label>2</label>
        <note>4Fe-4S-S-AdoMet</note>
    </ligand>
</feature>
<dbReference type="EC" id="2.8.4.3" evidence="1"/>
<dbReference type="EMBL" id="CP000776">
    <property type="protein sequence ID" value="ABS52253.1"/>
    <property type="molecule type" value="Genomic_DNA"/>
</dbReference>
<dbReference type="SMR" id="A7I0Q3"/>
<dbReference type="STRING" id="360107.CHAB381_0506"/>
<dbReference type="KEGG" id="cha:CHAB381_0506"/>
<dbReference type="eggNOG" id="COG0621">
    <property type="taxonomic scope" value="Bacteria"/>
</dbReference>
<dbReference type="HOGENOM" id="CLU_018697_2_0_7"/>
<dbReference type="OrthoDB" id="9805215at2"/>
<dbReference type="Proteomes" id="UP000002407">
    <property type="component" value="Chromosome"/>
</dbReference>
<dbReference type="GO" id="GO:0005829">
    <property type="term" value="C:cytosol"/>
    <property type="evidence" value="ECO:0007669"/>
    <property type="project" value="TreeGrafter"/>
</dbReference>
<dbReference type="GO" id="GO:0051539">
    <property type="term" value="F:4 iron, 4 sulfur cluster binding"/>
    <property type="evidence" value="ECO:0007669"/>
    <property type="project" value="UniProtKB-UniRule"/>
</dbReference>
<dbReference type="GO" id="GO:0046872">
    <property type="term" value="F:metal ion binding"/>
    <property type="evidence" value="ECO:0007669"/>
    <property type="project" value="UniProtKB-KW"/>
</dbReference>
<dbReference type="GO" id="GO:0035597">
    <property type="term" value="F:N6-isopentenyladenosine methylthiotransferase activity"/>
    <property type="evidence" value="ECO:0007669"/>
    <property type="project" value="TreeGrafter"/>
</dbReference>
<dbReference type="CDD" id="cd01335">
    <property type="entry name" value="Radical_SAM"/>
    <property type="match status" value="1"/>
</dbReference>
<dbReference type="FunFam" id="3.40.50.12160:FF:000003">
    <property type="entry name" value="CDK5 regulatory subunit-associated protein 1"/>
    <property type="match status" value="1"/>
</dbReference>
<dbReference type="FunFam" id="3.80.30.20:FF:000001">
    <property type="entry name" value="tRNA-2-methylthio-N(6)-dimethylallyladenosine synthase 2"/>
    <property type="match status" value="1"/>
</dbReference>
<dbReference type="Gene3D" id="3.40.50.12160">
    <property type="entry name" value="Methylthiotransferase, N-terminal domain"/>
    <property type="match status" value="1"/>
</dbReference>
<dbReference type="Gene3D" id="3.80.30.20">
    <property type="entry name" value="tm_1862 like domain"/>
    <property type="match status" value="1"/>
</dbReference>
<dbReference type="HAMAP" id="MF_01864">
    <property type="entry name" value="tRNA_metthiotr_MiaB"/>
    <property type="match status" value="1"/>
</dbReference>
<dbReference type="InterPro" id="IPR006638">
    <property type="entry name" value="Elp3/MiaA/NifB-like_rSAM"/>
</dbReference>
<dbReference type="InterPro" id="IPR005839">
    <property type="entry name" value="Methylthiotransferase"/>
</dbReference>
<dbReference type="InterPro" id="IPR020612">
    <property type="entry name" value="Methylthiotransferase_CS"/>
</dbReference>
<dbReference type="InterPro" id="IPR013848">
    <property type="entry name" value="Methylthiotransferase_N"/>
</dbReference>
<dbReference type="InterPro" id="IPR038135">
    <property type="entry name" value="Methylthiotransferase_N_sf"/>
</dbReference>
<dbReference type="InterPro" id="IPR006463">
    <property type="entry name" value="MiaB_methiolase"/>
</dbReference>
<dbReference type="InterPro" id="IPR007197">
    <property type="entry name" value="rSAM"/>
</dbReference>
<dbReference type="InterPro" id="IPR023404">
    <property type="entry name" value="rSAM_horseshoe"/>
</dbReference>
<dbReference type="InterPro" id="IPR002792">
    <property type="entry name" value="TRAM_dom"/>
</dbReference>
<dbReference type="NCBIfam" id="TIGR01574">
    <property type="entry name" value="miaB-methiolase"/>
    <property type="match status" value="1"/>
</dbReference>
<dbReference type="NCBIfam" id="TIGR00089">
    <property type="entry name" value="MiaB/RimO family radical SAM methylthiotransferase"/>
    <property type="match status" value="1"/>
</dbReference>
<dbReference type="PANTHER" id="PTHR43020">
    <property type="entry name" value="CDK5 REGULATORY SUBUNIT-ASSOCIATED PROTEIN 1"/>
    <property type="match status" value="1"/>
</dbReference>
<dbReference type="PANTHER" id="PTHR43020:SF2">
    <property type="entry name" value="MITOCHONDRIAL TRNA METHYLTHIOTRANSFERASE CDK5RAP1"/>
    <property type="match status" value="1"/>
</dbReference>
<dbReference type="Pfam" id="PF04055">
    <property type="entry name" value="Radical_SAM"/>
    <property type="match status" value="1"/>
</dbReference>
<dbReference type="Pfam" id="PF01938">
    <property type="entry name" value="TRAM"/>
    <property type="match status" value="1"/>
</dbReference>
<dbReference type="Pfam" id="PF00919">
    <property type="entry name" value="UPF0004"/>
    <property type="match status" value="1"/>
</dbReference>
<dbReference type="SFLD" id="SFLDF00273">
    <property type="entry name" value="(dimethylallyl)adenosine_tRNA"/>
    <property type="match status" value="1"/>
</dbReference>
<dbReference type="SFLD" id="SFLDG01082">
    <property type="entry name" value="B12-binding_domain_containing"/>
    <property type="match status" value="1"/>
</dbReference>
<dbReference type="SFLD" id="SFLDG01061">
    <property type="entry name" value="methylthiotransferase"/>
    <property type="match status" value="1"/>
</dbReference>
<dbReference type="SMART" id="SM00729">
    <property type="entry name" value="Elp3"/>
    <property type="match status" value="1"/>
</dbReference>
<dbReference type="SUPFAM" id="SSF102114">
    <property type="entry name" value="Radical SAM enzymes"/>
    <property type="match status" value="1"/>
</dbReference>
<dbReference type="PROSITE" id="PS51449">
    <property type="entry name" value="MTTASE_N"/>
    <property type="match status" value="1"/>
</dbReference>
<dbReference type="PROSITE" id="PS01278">
    <property type="entry name" value="MTTASE_RADICAL"/>
    <property type="match status" value="1"/>
</dbReference>
<dbReference type="PROSITE" id="PS51918">
    <property type="entry name" value="RADICAL_SAM"/>
    <property type="match status" value="1"/>
</dbReference>
<dbReference type="PROSITE" id="PS50926">
    <property type="entry name" value="TRAM"/>
    <property type="match status" value="1"/>
</dbReference>
<proteinExistence type="inferred from homology"/>
<name>MIAB_CAMHC</name>
<keyword id="KW-0004">4Fe-4S</keyword>
<keyword id="KW-0963">Cytoplasm</keyword>
<keyword id="KW-0408">Iron</keyword>
<keyword id="KW-0411">Iron-sulfur</keyword>
<keyword id="KW-0479">Metal-binding</keyword>
<keyword id="KW-1185">Reference proteome</keyword>
<keyword id="KW-0949">S-adenosyl-L-methionine</keyword>
<keyword id="KW-0808">Transferase</keyword>
<keyword id="KW-0819">tRNA processing</keyword>
<protein>
    <recommendedName>
        <fullName evidence="1">tRNA-2-methylthio-N(6)-dimethylallyladenosine synthase</fullName>
        <ecNumber evidence="1">2.8.4.3</ecNumber>
    </recommendedName>
    <alternativeName>
        <fullName evidence="1">(Dimethylallyl)adenosine tRNA methylthiotransferase MiaB</fullName>
    </alternativeName>
    <alternativeName>
        <fullName evidence="1">tRNA-i(6)A37 methylthiotransferase</fullName>
    </alternativeName>
</protein>
<comment type="function">
    <text evidence="1">Catalyzes the methylthiolation of N6-(dimethylallyl)adenosine (i(6)A), leading to the formation of 2-methylthio-N6-(dimethylallyl)adenosine (ms(2)i(6)A) at position 37 in tRNAs that read codons beginning with uridine.</text>
</comment>
<comment type="catalytic activity">
    <reaction evidence="1">
        <text>N(6)-dimethylallyladenosine(37) in tRNA + (sulfur carrier)-SH + AH2 + 2 S-adenosyl-L-methionine = 2-methylsulfanyl-N(6)-dimethylallyladenosine(37) in tRNA + (sulfur carrier)-H + 5'-deoxyadenosine + L-methionine + A + S-adenosyl-L-homocysteine + 2 H(+)</text>
        <dbReference type="Rhea" id="RHEA:37067"/>
        <dbReference type="Rhea" id="RHEA-COMP:10375"/>
        <dbReference type="Rhea" id="RHEA-COMP:10376"/>
        <dbReference type="Rhea" id="RHEA-COMP:14737"/>
        <dbReference type="Rhea" id="RHEA-COMP:14739"/>
        <dbReference type="ChEBI" id="CHEBI:13193"/>
        <dbReference type="ChEBI" id="CHEBI:15378"/>
        <dbReference type="ChEBI" id="CHEBI:17319"/>
        <dbReference type="ChEBI" id="CHEBI:17499"/>
        <dbReference type="ChEBI" id="CHEBI:29917"/>
        <dbReference type="ChEBI" id="CHEBI:57844"/>
        <dbReference type="ChEBI" id="CHEBI:57856"/>
        <dbReference type="ChEBI" id="CHEBI:59789"/>
        <dbReference type="ChEBI" id="CHEBI:64428"/>
        <dbReference type="ChEBI" id="CHEBI:74415"/>
        <dbReference type="ChEBI" id="CHEBI:74417"/>
        <dbReference type="EC" id="2.8.4.3"/>
    </reaction>
</comment>
<comment type="cofactor">
    <cofactor evidence="1">
        <name>[4Fe-4S] cluster</name>
        <dbReference type="ChEBI" id="CHEBI:49883"/>
    </cofactor>
    <text evidence="1">Binds 2 [4Fe-4S] clusters. One cluster is coordinated with 3 cysteines and an exchangeable S-adenosyl-L-methionine.</text>
</comment>
<comment type="subunit">
    <text evidence="1">Monomer.</text>
</comment>
<comment type="subcellular location">
    <subcellularLocation>
        <location evidence="1">Cytoplasm</location>
    </subcellularLocation>
</comment>
<comment type="similarity">
    <text evidence="1">Belongs to the methylthiotransferase family. MiaB subfamily.</text>
</comment>
<organism>
    <name type="scientific">Campylobacter hominis (strain ATCC BAA-381 / DSM 21671 / CCUG 45161 / LMG 19568 / NCTC 13146 / CH001A)</name>
    <dbReference type="NCBI Taxonomy" id="360107"/>
    <lineage>
        <taxon>Bacteria</taxon>
        <taxon>Pseudomonadati</taxon>
        <taxon>Campylobacterota</taxon>
        <taxon>Epsilonproteobacteria</taxon>
        <taxon>Campylobacterales</taxon>
        <taxon>Campylobacteraceae</taxon>
        <taxon>Campylobacter</taxon>
    </lineage>
</organism>
<accession>A7I0Q3</accession>
<evidence type="ECO:0000255" key="1">
    <source>
        <dbReference type="HAMAP-Rule" id="MF_01864"/>
    </source>
</evidence>
<evidence type="ECO:0000255" key="2">
    <source>
        <dbReference type="PROSITE-ProRule" id="PRU01266"/>
    </source>
</evidence>
<sequence length="429" mass="48649">MKLLYLQTLGCAMNVRDSEHIVAELKDEYKLTDDISKADLILINTCSVREKPVHKLFSEIGAFNKVRKNGSKIGVCGCTASHLGEEIFNKAPFVDFVLGARNVSKISEAVKTPKFISTDINYDESEFAFGEFRGSPYKAFVNIMIGCDKKCSYCIVPQTRGKEISIPAEIILNEASKAVQNGAKEIFLLGQNVNNYGKFFSSRHEKMDFSDLLVKISEIKGVERIRFTSPHPLHMDDKFLDIFTSNPKICKSMHMPLQSGSTKVLRDMRRGYDKEWFLNRALRLRKMCPEVSISTDIIVAYPTESEDDFKDTMEVLNEVKFEQIFSFKFSPRPLTAAENLPLIDNEIASKRLEILQSRHNEILDEIMKNQVGKIFDVYFEELRANGEVAGRSFSNFLVSVKGSEDLLGKILPVRIEKASRMVLYGKITA</sequence>
<reference key="1">
    <citation type="submission" date="2007-07" db="EMBL/GenBank/DDBJ databases">
        <title>Complete genome sequence of Campylobacter hominis ATCC BAA-381, a commensal isolated from the human gastrointestinal tract.</title>
        <authorList>
            <person name="Fouts D.E."/>
            <person name="Mongodin E.F."/>
            <person name="Puiu D."/>
            <person name="Sebastian Y."/>
            <person name="Miller W.G."/>
            <person name="Mandrell R.E."/>
            <person name="Nelson K.E."/>
        </authorList>
    </citation>
    <scope>NUCLEOTIDE SEQUENCE [LARGE SCALE GENOMIC DNA]</scope>
    <source>
        <strain>ATCC BAA-381 / DSM 21671 / CCUG 45161 / LMG 19568 / NCTC 13146 / CH001A</strain>
    </source>
</reference>